<accession>P12524</accession>
<accession>A2A2C9</accession>
<accession>B4DJH2</accession>
<accession>Q14897</accession>
<accession>Q5QPL0</accession>
<accession>Q5QPL1</accession>
<accession>Q9NUE9</accession>
<sequence length="364" mass="40327">MDYDSYQHYFYDYDCGEDFYRSTAPSEDIWKKFELVPSPPTSPPWGLGPGAGDPAPGIGPPEPWPGGCTGDEAESRGHSKGWGRNYASIIRRDCMWSGFSARERLERAVSDRLAPGAPRGNPPKASAAPDCTPSLEAGNPAPAAPCPLGEPKTQACSGSESPSDSENEEIDVVTVEKRQSLGIRKPVTITVRADPLDPCMKHFHISIHQQQHNYAARFPPESCSQEEASERGPQEEVLERDAAGEKEDEEDEEIVSPPPVESEAAQSCHPKPVSSDTEDVTKRKNHNFLERKRRNDLRSRFLALRDQVPTLASCSKAPKVVILSKALEYLQALVGAEKRMATEKRQLRCRQQQLQKRIAYLTGY</sequence>
<organism>
    <name type="scientific">Homo sapiens</name>
    <name type="common">Human</name>
    <dbReference type="NCBI Taxonomy" id="9606"/>
    <lineage>
        <taxon>Eukaryota</taxon>
        <taxon>Metazoa</taxon>
        <taxon>Chordata</taxon>
        <taxon>Craniata</taxon>
        <taxon>Vertebrata</taxon>
        <taxon>Euteleostomi</taxon>
        <taxon>Mammalia</taxon>
        <taxon>Eutheria</taxon>
        <taxon>Euarchontoglires</taxon>
        <taxon>Primates</taxon>
        <taxon>Haplorrhini</taxon>
        <taxon>Catarrhini</taxon>
        <taxon>Hominidae</taxon>
        <taxon>Homo</taxon>
    </lineage>
</organism>
<gene>
    <name type="primary">MYCL</name>
    <name type="synonym">BHLHE38</name>
    <name type="synonym">LMYC</name>
    <name type="synonym">MYCL1</name>
</gene>
<protein>
    <recommendedName>
        <fullName>Protein L-Myc</fullName>
    </recommendedName>
    <alternativeName>
        <fullName>Class E basic helix-loop-helix protein 38</fullName>
        <shortName>bHLHe38</shortName>
    </alternativeName>
    <alternativeName>
        <fullName>Protein L-Myc-1</fullName>
    </alternativeName>
    <alternativeName>
        <fullName>V-myc myelocytomatosis viral oncogene homolog</fullName>
    </alternativeName>
</protein>
<feature type="chain" id="PRO_0000127333" description="Protein L-Myc">
    <location>
        <begin position="1"/>
        <end position="364"/>
    </location>
</feature>
<feature type="domain" description="bHLH" evidence="1">
    <location>
        <begin position="281"/>
        <end position="333"/>
    </location>
</feature>
<feature type="region of interest" description="Disordered" evidence="2">
    <location>
        <begin position="41"/>
        <end position="81"/>
    </location>
</feature>
<feature type="region of interest" description="Disordered" evidence="2">
    <location>
        <begin position="111"/>
        <end position="172"/>
    </location>
</feature>
<feature type="region of interest" description="Disordered" evidence="2">
    <location>
        <begin position="219"/>
        <end position="285"/>
    </location>
</feature>
<feature type="region of interest" description="Leucine-zipper">
    <location>
        <begin position="333"/>
        <end position="361"/>
    </location>
</feature>
<feature type="compositionally biased region" description="Basic and acidic residues" evidence="2">
    <location>
        <begin position="228"/>
        <end position="245"/>
    </location>
</feature>
<feature type="splice variant" id="VSP_053766" description="In isoform 2 and isoform 3." evidence="8 9">
    <original>M</original>
    <variation>MCVCAGCRAAPSRRGAGPLQVAGGWSEGADM</variation>
    <location>
        <position position="1"/>
    </location>
</feature>
<feature type="splice variant" id="VSP_015539" description="In isoform 2." evidence="9">
    <original>ENEEIDVVTVEKRQSLGIRKPVTITVRADPLDPCMKHFHIS</original>
    <variation>GKDLPEPSKRGPPHGWPKLCPCLRSGIGSSQALGPSPPLFG</variation>
    <location>
        <begin position="166"/>
        <end position="206"/>
    </location>
</feature>
<feature type="splice variant" id="VSP_015540" description="In isoform 2." evidence="9">
    <location>
        <begin position="207"/>
        <end position="364"/>
    </location>
</feature>
<feature type="sequence variant" id="VAR_027802" description="In dbSNP:rs3134614." evidence="3 5 6 7">
    <original>T</original>
    <variation>S</variation>
    <location>
        <position position="362"/>
    </location>
</feature>
<evidence type="ECO:0000255" key="1">
    <source>
        <dbReference type="PROSITE-ProRule" id="PRU00981"/>
    </source>
</evidence>
<evidence type="ECO:0000256" key="2">
    <source>
        <dbReference type="SAM" id="MobiDB-lite"/>
    </source>
</evidence>
<evidence type="ECO:0000269" key="3">
    <source>
    </source>
</evidence>
<evidence type="ECO:0000269" key="4">
    <source>
    </source>
</evidence>
<evidence type="ECO:0000269" key="5">
    <source>
    </source>
</evidence>
<evidence type="ECO:0000269" key="6">
    <source>
    </source>
</evidence>
<evidence type="ECO:0000269" key="7">
    <source ref="5"/>
</evidence>
<evidence type="ECO:0000303" key="8">
    <source>
    </source>
</evidence>
<evidence type="ECO:0000303" key="9">
    <source>
    </source>
</evidence>
<evidence type="ECO:0000305" key="10"/>
<name>MYCL_HUMAN</name>
<keyword id="KW-0025">Alternative splicing</keyword>
<keyword id="KW-0903">Direct protein sequencing</keyword>
<keyword id="KW-0238">DNA-binding</keyword>
<keyword id="KW-0539">Nucleus</keyword>
<keyword id="KW-1267">Proteomics identification</keyword>
<keyword id="KW-1185">Reference proteome</keyword>
<proteinExistence type="evidence at protein level"/>
<reference key="1">
    <citation type="journal article" date="1987" name="Genes Dev.">
        <title>The human myc gene family: structure and activity of L-myc and an L-myc pseudogene.</title>
        <authorList>
            <person name="DePinho R.A."/>
            <person name="Hatton K.S."/>
            <person name="Tesfaye A."/>
            <person name="Yancopoulos G.D."/>
            <person name="Alt F.W."/>
        </authorList>
    </citation>
    <scope>NUCLEOTIDE SEQUENCE [GENOMIC DNA]</scope>
    <scope>VARIANT SER-362</scope>
    <source>
        <tissue>Placenta</tissue>
    </source>
</reference>
<reference key="2">
    <citation type="journal article" date="1988" name="Mol. Cell. Biol.">
        <title>Structure and expression of the human L-myc gene reveal a complex pattern of alternative mRNA processing.</title>
        <authorList>
            <person name="Kaye F."/>
            <person name="Battey J."/>
            <person name="Nau M."/>
            <person name="Brooks B."/>
            <person name="Seifter E."/>
            <person name="de Greve J."/>
            <person name="Birrer M."/>
            <person name="Sausville E."/>
            <person name="Minna J."/>
        </authorList>
    </citation>
    <scope>NUCLEOTIDE SEQUENCE [GENOMIC DNA]</scope>
    <scope>ALTERNATIVE SPLICING</scope>
    <scope>VARIANT SER-362</scope>
    <source>
        <tissue>Placenta</tissue>
    </source>
</reference>
<reference key="3">
    <citation type="journal article" date="2004" name="Nat. Genet.">
        <title>Complete sequencing and characterization of 21,243 full-length human cDNAs.</title>
        <authorList>
            <person name="Ota T."/>
            <person name="Suzuki Y."/>
            <person name="Nishikawa T."/>
            <person name="Otsuki T."/>
            <person name="Sugiyama T."/>
            <person name="Irie R."/>
            <person name="Wakamatsu A."/>
            <person name="Hayashi K."/>
            <person name="Sato H."/>
            <person name="Nagai K."/>
            <person name="Kimura K."/>
            <person name="Makita H."/>
            <person name="Sekine M."/>
            <person name="Obayashi M."/>
            <person name="Nishi T."/>
            <person name="Shibahara T."/>
            <person name="Tanaka T."/>
            <person name="Ishii S."/>
            <person name="Yamamoto J."/>
            <person name="Saito K."/>
            <person name="Kawai Y."/>
            <person name="Isono Y."/>
            <person name="Nakamura Y."/>
            <person name="Nagahari K."/>
            <person name="Murakami K."/>
            <person name="Yasuda T."/>
            <person name="Iwayanagi T."/>
            <person name="Wagatsuma M."/>
            <person name="Shiratori A."/>
            <person name="Sudo H."/>
            <person name="Hosoiri T."/>
            <person name="Kaku Y."/>
            <person name="Kodaira H."/>
            <person name="Kondo H."/>
            <person name="Sugawara M."/>
            <person name="Takahashi M."/>
            <person name="Kanda K."/>
            <person name="Yokoi T."/>
            <person name="Furuya T."/>
            <person name="Kikkawa E."/>
            <person name="Omura Y."/>
            <person name="Abe K."/>
            <person name="Kamihara K."/>
            <person name="Katsuta N."/>
            <person name="Sato K."/>
            <person name="Tanikawa M."/>
            <person name="Yamazaki M."/>
            <person name="Ninomiya K."/>
            <person name="Ishibashi T."/>
            <person name="Yamashita H."/>
            <person name="Murakawa K."/>
            <person name="Fujimori K."/>
            <person name="Tanai H."/>
            <person name="Kimata M."/>
            <person name="Watanabe M."/>
            <person name="Hiraoka S."/>
            <person name="Chiba Y."/>
            <person name="Ishida S."/>
            <person name="Ono Y."/>
            <person name="Takiguchi S."/>
            <person name="Watanabe S."/>
            <person name="Yosida M."/>
            <person name="Hotuta T."/>
            <person name="Kusano J."/>
            <person name="Kanehori K."/>
            <person name="Takahashi-Fujii A."/>
            <person name="Hara H."/>
            <person name="Tanase T.-O."/>
            <person name="Nomura Y."/>
            <person name="Togiya S."/>
            <person name="Komai F."/>
            <person name="Hara R."/>
            <person name="Takeuchi K."/>
            <person name="Arita M."/>
            <person name="Imose N."/>
            <person name="Musashino K."/>
            <person name="Yuuki H."/>
            <person name="Oshima A."/>
            <person name="Sasaki N."/>
            <person name="Aotsuka S."/>
            <person name="Yoshikawa Y."/>
            <person name="Matsunawa H."/>
            <person name="Ichihara T."/>
            <person name="Shiohata N."/>
            <person name="Sano S."/>
            <person name="Moriya S."/>
            <person name="Momiyama H."/>
            <person name="Satoh N."/>
            <person name="Takami S."/>
            <person name="Terashima Y."/>
            <person name="Suzuki O."/>
            <person name="Nakagawa S."/>
            <person name="Senoh A."/>
            <person name="Mizoguchi H."/>
            <person name="Goto Y."/>
            <person name="Shimizu F."/>
            <person name="Wakebe H."/>
            <person name="Hishigaki H."/>
            <person name="Watanabe T."/>
            <person name="Sugiyama A."/>
            <person name="Takemoto M."/>
            <person name="Kawakami B."/>
            <person name="Yamazaki M."/>
            <person name="Watanabe K."/>
            <person name="Kumagai A."/>
            <person name="Itakura S."/>
            <person name="Fukuzumi Y."/>
            <person name="Fujimori Y."/>
            <person name="Komiyama M."/>
            <person name="Tashiro H."/>
            <person name="Tanigami A."/>
            <person name="Fujiwara T."/>
            <person name="Ono T."/>
            <person name="Yamada K."/>
            <person name="Fujii Y."/>
            <person name="Ozaki K."/>
            <person name="Hirao M."/>
            <person name="Ohmori Y."/>
            <person name="Kawabata A."/>
            <person name="Hikiji T."/>
            <person name="Kobatake N."/>
            <person name="Inagaki H."/>
            <person name="Ikema Y."/>
            <person name="Okamoto S."/>
            <person name="Okitani R."/>
            <person name="Kawakami T."/>
            <person name="Noguchi S."/>
            <person name="Itoh T."/>
            <person name="Shigeta K."/>
            <person name="Senba T."/>
            <person name="Matsumura K."/>
            <person name="Nakajima Y."/>
            <person name="Mizuno T."/>
            <person name="Morinaga M."/>
            <person name="Sasaki M."/>
            <person name="Togashi T."/>
            <person name="Oyama M."/>
            <person name="Hata H."/>
            <person name="Watanabe M."/>
            <person name="Komatsu T."/>
            <person name="Mizushima-Sugano J."/>
            <person name="Satoh T."/>
            <person name="Shirai Y."/>
            <person name="Takahashi Y."/>
            <person name="Nakagawa K."/>
            <person name="Okumura K."/>
            <person name="Nagase T."/>
            <person name="Nomura N."/>
            <person name="Kikuchi H."/>
            <person name="Masuho Y."/>
            <person name="Yamashita R."/>
            <person name="Nakai K."/>
            <person name="Yada T."/>
            <person name="Nakamura Y."/>
            <person name="Ohara O."/>
            <person name="Isogai T."/>
            <person name="Sugano S."/>
        </authorList>
    </citation>
    <scope>NUCLEOTIDE SEQUENCE [LARGE SCALE MRNA] (ISOFORM 3)</scope>
    <scope>VARIANT SER-362</scope>
    <source>
        <tissue>Thalamus</tissue>
    </source>
</reference>
<reference key="4">
    <citation type="journal article" date="2006" name="Nature">
        <title>The DNA sequence and biological annotation of human chromosome 1.</title>
        <authorList>
            <person name="Gregory S.G."/>
            <person name="Barlow K.F."/>
            <person name="McLay K.E."/>
            <person name="Kaul R."/>
            <person name="Swarbreck D."/>
            <person name="Dunham A."/>
            <person name="Scott C.E."/>
            <person name="Howe K.L."/>
            <person name="Woodfine K."/>
            <person name="Spencer C.C.A."/>
            <person name="Jones M.C."/>
            <person name="Gillson C."/>
            <person name="Searle S."/>
            <person name="Zhou Y."/>
            <person name="Kokocinski F."/>
            <person name="McDonald L."/>
            <person name="Evans R."/>
            <person name="Phillips K."/>
            <person name="Atkinson A."/>
            <person name="Cooper R."/>
            <person name="Jones C."/>
            <person name="Hall R.E."/>
            <person name="Andrews T.D."/>
            <person name="Lloyd C."/>
            <person name="Ainscough R."/>
            <person name="Almeida J.P."/>
            <person name="Ambrose K.D."/>
            <person name="Anderson F."/>
            <person name="Andrew R.W."/>
            <person name="Ashwell R.I.S."/>
            <person name="Aubin K."/>
            <person name="Babbage A.K."/>
            <person name="Bagguley C.L."/>
            <person name="Bailey J."/>
            <person name="Beasley H."/>
            <person name="Bethel G."/>
            <person name="Bird C.P."/>
            <person name="Bray-Allen S."/>
            <person name="Brown J.Y."/>
            <person name="Brown A.J."/>
            <person name="Buckley D."/>
            <person name="Burton J."/>
            <person name="Bye J."/>
            <person name="Carder C."/>
            <person name="Chapman J.C."/>
            <person name="Clark S.Y."/>
            <person name="Clarke G."/>
            <person name="Clee C."/>
            <person name="Cobley V."/>
            <person name="Collier R.E."/>
            <person name="Corby N."/>
            <person name="Coville G.J."/>
            <person name="Davies J."/>
            <person name="Deadman R."/>
            <person name="Dunn M."/>
            <person name="Earthrowl M."/>
            <person name="Ellington A.G."/>
            <person name="Errington H."/>
            <person name="Frankish A."/>
            <person name="Frankland J."/>
            <person name="French L."/>
            <person name="Garner P."/>
            <person name="Garnett J."/>
            <person name="Gay L."/>
            <person name="Ghori M.R.J."/>
            <person name="Gibson R."/>
            <person name="Gilby L.M."/>
            <person name="Gillett W."/>
            <person name="Glithero R.J."/>
            <person name="Grafham D.V."/>
            <person name="Griffiths C."/>
            <person name="Griffiths-Jones S."/>
            <person name="Grocock R."/>
            <person name="Hammond S."/>
            <person name="Harrison E.S.I."/>
            <person name="Hart E."/>
            <person name="Haugen E."/>
            <person name="Heath P.D."/>
            <person name="Holmes S."/>
            <person name="Holt K."/>
            <person name="Howden P.J."/>
            <person name="Hunt A.R."/>
            <person name="Hunt S.E."/>
            <person name="Hunter G."/>
            <person name="Isherwood J."/>
            <person name="James R."/>
            <person name="Johnson C."/>
            <person name="Johnson D."/>
            <person name="Joy A."/>
            <person name="Kay M."/>
            <person name="Kershaw J.K."/>
            <person name="Kibukawa M."/>
            <person name="Kimberley A.M."/>
            <person name="King A."/>
            <person name="Knights A.J."/>
            <person name="Lad H."/>
            <person name="Laird G."/>
            <person name="Lawlor S."/>
            <person name="Leongamornlert D.A."/>
            <person name="Lloyd D.M."/>
            <person name="Loveland J."/>
            <person name="Lovell J."/>
            <person name="Lush M.J."/>
            <person name="Lyne R."/>
            <person name="Martin S."/>
            <person name="Mashreghi-Mohammadi M."/>
            <person name="Matthews L."/>
            <person name="Matthews N.S.W."/>
            <person name="McLaren S."/>
            <person name="Milne S."/>
            <person name="Mistry S."/>
            <person name="Moore M.J.F."/>
            <person name="Nickerson T."/>
            <person name="O'Dell C.N."/>
            <person name="Oliver K."/>
            <person name="Palmeiri A."/>
            <person name="Palmer S.A."/>
            <person name="Parker A."/>
            <person name="Patel D."/>
            <person name="Pearce A.V."/>
            <person name="Peck A.I."/>
            <person name="Pelan S."/>
            <person name="Phelps K."/>
            <person name="Phillimore B.J."/>
            <person name="Plumb R."/>
            <person name="Rajan J."/>
            <person name="Raymond C."/>
            <person name="Rouse G."/>
            <person name="Saenphimmachak C."/>
            <person name="Sehra H.K."/>
            <person name="Sheridan E."/>
            <person name="Shownkeen R."/>
            <person name="Sims S."/>
            <person name="Skuce C.D."/>
            <person name="Smith M."/>
            <person name="Steward C."/>
            <person name="Subramanian S."/>
            <person name="Sycamore N."/>
            <person name="Tracey A."/>
            <person name="Tromans A."/>
            <person name="Van Helmond Z."/>
            <person name="Wall M."/>
            <person name="Wallis J.M."/>
            <person name="White S."/>
            <person name="Whitehead S.L."/>
            <person name="Wilkinson J.E."/>
            <person name="Willey D.L."/>
            <person name="Williams H."/>
            <person name="Wilming L."/>
            <person name="Wray P.W."/>
            <person name="Wu Z."/>
            <person name="Coulson A."/>
            <person name="Vaudin M."/>
            <person name="Sulston J.E."/>
            <person name="Durbin R.M."/>
            <person name="Hubbard T."/>
            <person name="Wooster R."/>
            <person name="Dunham I."/>
            <person name="Carter N.P."/>
            <person name="McVean G."/>
            <person name="Ross M.T."/>
            <person name="Harrow J."/>
            <person name="Olson M.V."/>
            <person name="Beck S."/>
            <person name="Rogers J."/>
            <person name="Bentley D.R."/>
        </authorList>
    </citation>
    <scope>NUCLEOTIDE SEQUENCE [LARGE SCALE GENOMIC DNA]</scope>
</reference>
<reference key="5">
    <citation type="submission" date="2005-09" db="EMBL/GenBank/DDBJ databases">
        <authorList>
            <person name="Mural R.J."/>
            <person name="Istrail S."/>
            <person name="Sutton G.G."/>
            <person name="Florea L."/>
            <person name="Halpern A.L."/>
            <person name="Mobarry C.M."/>
            <person name="Lippert R."/>
            <person name="Walenz B."/>
            <person name="Shatkay H."/>
            <person name="Dew I."/>
            <person name="Miller J.R."/>
            <person name="Flanigan M.J."/>
            <person name="Edwards N.J."/>
            <person name="Bolanos R."/>
            <person name="Fasulo D."/>
            <person name="Halldorsson B.V."/>
            <person name="Hannenhalli S."/>
            <person name="Turner R."/>
            <person name="Yooseph S."/>
            <person name="Lu F."/>
            <person name="Nusskern D.R."/>
            <person name="Shue B.C."/>
            <person name="Zheng X.H."/>
            <person name="Zhong F."/>
            <person name="Delcher A.L."/>
            <person name="Huson D.H."/>
            <person name="Kravitz S.A."/>
            <person name="Mouchard L."/>
            <person name="Reinert K."/>
            <person name="Remington K.A."/>
            <person name="Clark A.G."/>
            <person name="Waterman M.S."/>
            <person name="Eichler E.E."/>
            <person name="Adams M.D."/>
            <person name="Hunkapiller M.W."/>
            <person name="Myers E.W."/>
            <person name="Venter J.C."/>
        </authorList>
    </citation>
    <scope>NUCLEOTIDE SEQUENCE [LARGE SCALE GENOMIC DNA]</scope>
    <scope>VARIANT SER-362</scope>
</reference>
<reference key="6">
    <citation type="journal article" date="2004" name="Genome Res.">
        <title>The status, quality, and expansion of the NIH full-length cDNA project: the Mammalian Gene Collection (MGC).</title>
        <authorList>
            <consortium name="The MGC Project Team"/>
        </authorList>
    </citation>
    <scope>NUCLEOTIDE SEQUENCE [LARGE SCALE MRNA] (ISOFORM 2)</scope>
    <source>
        <tissue>Placenta</tissue>
    </source>
</reference>
<reference key="7">
    <citation type="journal article" date="1989" name="EMBO J.">
        <title>The human L-myc gene is expressed as two forms of protein in small cell lung carcinoma cell lines: detection by monoclonal antibodies specific to two myc homology box sequences.</title>
        <authorList>
            <person name="Ikegaki N."/>
            <person name="Minna J."/>
            <person name="Kennett R.H."/>
        </authorList>
    </citation>
    <scope>PROTEIN SEQUENCE OF 165-179 (ISOFORM 1)</scope>
    <scope>SUBCELLULAR LOCATION</scope>
</reference>
<dbReference type="EMBL" id="X07262">
    <property type="protein sequence ID" value="CAA30248.1"/>
    <property type="status" value="ALT_SEQ"/>
    <property type="molecule type" value="Genomic_DNA"/>
</dbReference>
<dbReference type="EMBL" id="X07263">
    <property type="protein sequence ID" value="CAA30249.1"/>
    <property type="molecule type" value="Genomic_DNA"/>
</dbReference>
<dbReference type="EMBL" id="M19720">
    <property type="protein sequence ID" value="AAA59879.1"/>
    <property type="molecule type" value="Genomic_DNA"/>
</dbReference>
<dbReference type="EMBL" id="M19720">
    <property type="protein sequence ID" value="AAA59878.1"/>
    <property type="molecule type" value="Genomic_DNA"/>
</dbReference>
<dbReference type="EMBL" id="AK296078">
    <property type="protein sequence ID" value="BAG58834.1"/>
    <property type="molecule type" value="mRNA"/>
</dbReference>
<dbReference type="EMBL" id="AL033527">
    <property type="status" value="NOT_ANNOTATED_CDS"/>
    <property type="molecule type" value="Genomic_DNA"/>
</dbReference>
<dbReference type="EMBL" id="CH471059">
    <property type="protein sequence ID" value="EAX07251.1"/>
    <property type="molecule type" value="Genomic_DNA"/>
</dbReference>
<dbReference type="EMBL" id="BC011864">
    <property type="protein sequence ID" value="AAH11864.1"/>
    <property type="status" value="ALT_INIT"/>
    <property type="molecule type" value="mRNA"/>
</dbReference>
<dbReference type="CCDS" id="CCDS30682.1">
    <molecule id="P12524-1"/>
</dbReference>
<dbReference type="CCDS" id="CCDS44117.2">
    <molecule id="P12524-2"/>
</dbReference>
<dbReference type="CCDS" id="CCDS53300.1">
    <molecule id="P12524-3"/>
</dbReference>
<dbReference type="PIR" id="A27675">
    <property type="entry name" value="TVHUML"/>
</dbReference>
<dbReference type="RefSeq" id="NP_001028253.1">
    <molecule id="P12524-1"/>
    <property type="nucleotide sequence ID" value="NM_001033081.3"/>
</dbReference>
<dbReference type="RefSeq" id="NP_001028254.2">
    <molecule id="P12524-3"/>
    <property type="nucleotide sequence ID" value="NM_001033082.3"/>
</dbReference>
<dbReference type="RefSeq" id="NP_005367.2">
    <molecule id="P12524-2"/>
    <property type="nucleotide sequence ID" value="NM_005376.5"/>
</dbReference>
<dbReference type="SMR" id="P12524"/>
<dbReference type="BioGRID" id="110695">
    <property type="interactions" value="47"/>
</dbReference>
<dbReference type="ComplexPortal" id="CPX-2548">
    <property type="entry name" value="MYCL-MAX transcriptional activator complex"/>
</dbReference>
<dbReference type="FunCoup" id="P12524">
    <property type="interactions" value="1088"/>
</dbReference>
<dbReference type="IntAct" id="P12524">
    <property type="interactions" value="44"/>
</dbReference>
<dbReference type="STRING" id="9606.ENSP00000380494"/>
<dbReference type="iPTMnet" id="P12524"/>
<dbReference type="PhosphoSitePlus" id="P12524"/>
<dbReference type="BioMuta" id="MYCL"/>
<dbReference type="DMDM" id="311033401"/>
<dbReference type="jPOST" id="P12524"/>
<dbReference type="MassIVE" id="P12524"/>
<dbReference type="PaxDb" id="9606-ENSP00000380494"/>
<dbReference type="PeptideAtlas" id="P12524"/>
<dbReference type="ProteomicsDB" id="52853">
    <molecule id="P12524-1"/>
</dbReference>
<dbReference type="Antibodypedia" id="17920">
    <property type="antibodies" value="160 antibodies from 28 providers"/>
</dbReference>
<dbReference type="DNASU" id="4610"/>
<dbReference type="Ensembl" id="ENST00000372815.1">
    <molecule id="P12524-2"/>
    <property type="protein sequence ID" value="ENSP00000361902.1"/>
    <property type="gene ID" value="ENSG00000116990.12"/>
</dbReference>
<dbReference type="Ensembl" id="ENST00000372816.3">
    <molecule id="P12524-1"/>
    <property type="protein sequence ID" value="ENSP00000361903.2"/>
    <property type="gene ID" value="ENSG00000116990.12"/>
</dbReference>
<dbReference type="Ensembl" id="ENST00000397332.3">
    <molecule id="P12524-3"/>
    <property type="protein sequence ID" value="ENSP00000380494.2"/>
    <property type="gene ID" value="ENSG00000116990.12"/>
</dbReference>
<dbReference type="GeneID" id="4610"/>
<dbReference type="KEGG" id="hsa:4610"/>
<dbReference type="MANE-Select" id="ENST00000372816.3">
    <property type="protein sequence ID" value="ENSP00000361903.2"/>
    <property type="RefSeq nucleotide sequence ID" value="NM_001033081.3"/>
    <property type="RefSeq protein sequence ID" value="NP_001028253.1"/>
</dbReference>
<dbReference type="UCSC" id="uc001cer.3">
    <molecule id="P12524-1"/>
    <property type="organism name" value="human"/>
</dbReference>
<dbReference type="AGR" id="HGNC:7555"/>
<dbReference type="CTD" id="4610"/>
<dbReference type="DisGeNET" id="4610"/>
<dbReference type="GeneCards" id="MYCL"/>
<dbReference type="HGNC" id="HGNC:7555">
    <property type="gene designation" value="MYCL"/>
</dbReference>
<dbReference type="HPA" id="ENSG00000116990">
    <property type="expression patterns" value="Tissue enhanced (pancreas, skin)"/>
</dbReference>
<dbReference type="MalaCards" id="MYCL"/>
<dbReference type="MIM" id="164850">
    <property type="type" value="gene"/>
</dbReference>
<dbReference type="neXtProt" id="NX_P12524"/>
<dbReference type="OpenTargets" id="ENSG00000116990"/>
<dbReference type="PharmGKB" id="PA31355"/>
<dbReference type="VEuPathDB" id="HostDB:ENSG00000116990"/>
<dbReference type="eggNOG" id="ENOG502QWSU">
    <property type="taxonomic scope" value="Eukaryota"/>
</dbReference>
<dbReference type="GeneTree" id="ENSGT00940000158613"/>
<dbReference type="HOGENOM" id="CLU_052560_0_0_1"/>
<dbReference type="InParanoid" id="P12524"/>
<dbReference type="OMA" id="CGRNYAS"/>
<dbReference type="OrthoDB" id="5964374at2759"/>
<dbReference type="PAN-GO" id="P12524">
    <property type="GO annotations" value="3 GO annotations based on evolutionary models"/>
</dbReference>
<dbReference type="PhylomeDB" id="P12524"/>
<dbReference type="TreeFam" id="TF106001"/>
<dbReference type="PathwayCommons" id="P12524"/>
<dbReference type="SignaLink" id="P12524"/>
<dbReference type="SIGNOR" id="P12524"/>
<dbReference type="BioGRID-ORCS" id="4610">
    <property type="hits" value="16 hits in 1176 CRISPR screens"/>
</dbReference>
<dbReference type="ChiTaRS" id="MYCL">
    <property type="organism name" value="human"/>
</dbReference>
<dbReference type="GeneWiki" id="MYCL1"/>
<dbReference type="GenomeRNAi" id="4610"/>
<dbReference type="Pharos" id="P12524">
    <property type="development level" value="Tbio"/>
</dbReference>
<dbReference type="PRO" id="PR:P12524"/>
<dbReference type="Proteomes" id="UP000005640">
    <property type="component" value="Chromosome 1"/>
</dbReference>
<dbReference type="RNAct" id="P12524">
    <property type="molecule type" value="protein"/>
</dbReference>
<dbReference type="Bgee" id="ENSG00000116990">
    <property type="expression patterns" value="Expressed in monocyte and 141 other cell types or tissues"/>
</dbReference>
<dbReference type="ExpressionAtlas" id="P12524">
    <property type="expression patterns" value="baseline and differential"/>
</dbReference>
<dbReference type="GO" id="GO:0000785">
    <property type="term" value="C:chromatin"/>
    <property type="evidence" value="ECO:0000247"/>
    <property type="project" value="NTNU_SB"/>
</dbReference>
<dbReference type="GO" id="GO:0005694">
    <property type="term" value="C:chromosome"/>
    <property type="evidence" value="ECO:0000314"/>
    <property type="project" value="HPA"/>
</dbReference>
<dbReference type="GO" id="GO:0005654">
    <property type="term" value="C:nucleoplasm"/>
    <property type="evidence" value="ECO:0000314"/>
    <property type="project" value="HPA"/>
</dbReference>
<dbReference type="GO" id="GO:0003677">
    <property type="term" value="F:DNA binding"/>
    <property type="evidence" value="ECO:0000304"/>
    <property type="project" value="UniProtKB"/>
</dbReference>
<dbReference type="GO" id="GO:0000981">
    <property type="term" value="F:DNA-binding transcription factor activity, RNA polymerase II-specific"/>
    <property type="evidence" value="ECO:0000247"/>
    <property type="project" value="NTNU_SB"/>
</dbReference>
<dbReference type="GO" id="GO:0046983">
    <property type="term" value="F:protein dimerization activity"/>
    <property type="evidence" value="ECO:0007669"/>
    <property type="project" value="InterPro"/>
</dbReference>
<dbReference type="GO" id="GO:0000978">
    <property type="term" value="F:RNA polymerase II cis-regulatory region sequence-specific DNA binding"/>
    <property type="evidence" value="ECO:0000318"/>
    <property type="project" value="GO_Central"/>
</dbReference>
<dbReference type="GO" id="GO:0045607">
    <property type="term" value="P:regulation of inner ear auditory receptor cell differentiation"/>
    <property type="evidence" value="ECO:0007669"/>
    <property type="project" value="Ensembl"/>
</dbReference>
<dbReference type="GO" id="GO:0006357">
    <property type="term" value="P:regulation of transcription by RNA polymerase II"/>
    <property type="evidence" value="ECO:0000318"/>
    <property type="project" value="GO_Central"/>
</dbReference>
<dbReference type="CDD" id="cd11457">
    <property type="entry name" value="bHLHzip_L-Myc"/>
    <property type="match status" value="1"/>
</dbReference>
<dbReference type="FunFam" id="4.10.280.10:FF:000019">
    <property type="entry name" value="Myc proto-oncogene protein"/>
    <property type="match status" value="1"/>
</dbReference>
<dbReference type="Gene3D" id="4.10.280.10">
    <property type="entry name" value="Helix-loop-helix DNA-binding domain"/>
    <property type="match status" value="1"/>
</dbReference>
<dbReference type="InterPro" id="IPR011598">
    <property type="entry name" value="bHLH_dom"/>
</dbReference>
<dbReference type="InterPro" id="IPR036638">
    <property type="entry name" value="HLH_DNA-bd_sf"/>
</dbReference>
<dbReference type="InterPro" id="IPR050433">
    <property type="entry name" value="Myc_transcription_factors"/>
</dbReference>
<dbReference type="InterPro" id="IPR002418">
    <property type="entry name" value="Tscrpt_reg_Myc"/>
</dbReference>
<dbReference type="InterPro" id="IPR012682">
    <property type="entry name" value="Tscrpt_reg_Myc_N"/>
</dbReference>
<dbReference type="PANTHER" id="PTHR45851">
    <property type="entry name" value="MYC PROTO-ONCOGENE"/>
    <property type="match status" value="1"/>
</dbReference>
<dbReference type="Pfam" id="PF00010">
    <property type="entry name" value="HLH"/>
    <property type="match status" value="1"/>
</dbReference>
<dbReference type="Pfam" id="PF01056">
    <property type="entry name" value="Myc_N"/>
    <property type="match status" value="3"/>
</dbReference>
<dbReference type="PIRSF" id="PIRSF001705">
    <property type="entry name" value="Myc_protein"/>
    <property type="match status" value="1"/>
</dbReference>
<dbReference type="PRINTS" id="PR00044">
    <property type="entry name" value="LEUZIPPRMYC"/>
</dbReference>
<dbReference type="SMART" id="SM00353">
    <property type="entry name" value="HLH"/>
    <property type="match status" value="1"/>
</dbReference>
<dbReference type="SUPFAM" id="SSF47459">
    <property type="entry name" value="HLH, helix-loop-helix DNA-binding domain"/>
    <property type="match status" value="1"/>
</dbReference>
<dbReference type="PROSITE" id="PS50888">
    <property type="entry name" value="BHLH"/>
    <property type="match status" value="1"/>
</dbReference>
<comment type="subunit">
    <text>Efficient DNA binding requires dimerization with another bHLH protein. Binds DNA as a heterodimer with MAX.</text>
</comment>
<comment type="interaction">
    <interactant intactId="EBI-18936665">
        <id>P12524-2</id>
    </interactant>
    <interactant intactId="EBI-744545">
        <id>Q8NEC5</id>
        <label>CATSPER1</label>
    </interactant>
    <organismsDiffer>false</organismsDiffer>
    <experiments>3</experiments>
</comment>
<comment type="interaction">
    <interactant intactId="EBI-18936665">
        <id>P12524-2</id>
    </interactant>
    <interactant intactId="EBI-12010594">
        <id>O75909-2</id>
        <label>CCNK</label>
    </interactant>
    <organismsDiffer>false</organismsDiffer>
    <experiments>3</experiments>
</comment>
<comment type="interaction">
    <interactant intactId="EBI-18936665">
        <id>P12524-2</id>
    </interactant>
    <interactant intactId="EBI-11960139">
        <id>Q7L8S5</id>
        <label>OTUD6A</label>
    </interactant>
    <organismsDiffer>false</organismsDiffer>
    <experiments>3</experiments>
</comment>
<comment type="interaction">
    <interactant intactId="EBI-18936665">
        <id>P12524-2</id>
    </interactant>
    <interactant intactId="EBI-1383852">
        <id>P54646</id>
        <label>PRKAA2</label>
    </interactant>
    <organismsDiffer>false</organismsDiffer>
    <experiments>3</experiments>
</comment>
<comment type="subcellular location">
    <subcellularLocation>
        <location evidence="1 4">Nucleus</location>
    </subcellularLocation>
</comment>
<comment type="alternative products">
    <event type="alternative splicing"/>
    <isoform>
        <id>P12524-1</id>
        <name>1</name>
        <sequence type="displayed"/>
    </isoform>
    <isoform>
        <id>P12524-2</id>
        <name>2</name>
        <name>Short</name>
        <sequence type="described" ref="VSP_053766 VSP_015539 VSP_015540"/>
    </isoform>
    <isoform>
        <id>P12524-3</id>
        <name>3</name>
        <sequence type="described" ref="VSP_053766"/>
    </isoform>
</comment>
<comment type="sequence caution" evidence="10">
    <conflict type="erroneous initiation">
        <sequence resource="EMBL-CDS" id="AAH11864"/>
    </conflict>
    <text>Truncated N-terminus.</text>
</comment>
<comment type="sequence caution" evidence="10">
    <conflict type="erroneous gene model prediction">
        <sequence resource="EMBL-CDS" id="CAA30248"/>
    </conflict>
</comment>